<organism>
    <name type="scientific">Escherichia coli O139:H28 (strain E24377A / ETEC)</name>
    <dbReference type="NCBI Taxonomy" id="331111"/>
    <lineage>
        <taxon>Bacteria</taxon>
        <taxon>Pseudomonadati</taxon>
        <taxon>Pseudomonadota</taxon>
        <taxon>Gammaproteobacteria</taxon>
        <taxon>Enterobacterales</taxon>
        <taxon>Enterobacteriaceae</taxon>
        <taxon>Escherichia</taxon>
    </lineage>
</organism>
<protein>
    <recommendedName>
        <fullName evidence="1">UvrABC system protein C</fullName>
        <shortName evidence="1">Protein UvrC</shortName>
    </recommendedName>
    <alternativeName>
        <fullName evidence="1">Excinuclease ABC subunit C</fullName>
    </alternativeName>
</protein>
<gene>
    <name evidence="1" type="primary">uvrC</name>
    <name type="ordered locus">EcE24377A_2146</name>
</gene>
<evidence type="ECO:0000255" key="1">
    <source>
        <dbReference type="HAMAP-Rule" id="MF_00203"/>
    </source>
</evidence>
<sequence>MSDQFDAKAFLKTVTSQPGVYRMYDAGGTVIYVGKAKDLKKRLSSYFRSNLASRKTEALVAQIQQIDVTVTHTETEALLLEHNYIKLYQPRYNVLLRDDKSYPFIFLSGDTHPRLAMHRGAKHAKGEYFGPFPNGYAVRETLALLQKIFPIRQCENSVYRNRSRPCLQYQIGRCLGPCVEGLVSEEEYAQQVEYVRLFLSGKDDQVLTQLISRMETASQNLEFEEAARIRDQIQAVRRVTEKQFVSNTGDDLDVIGVAFDAGMACVHVLFIRQGKVLGSRSYFPKVPGGTELSEVVETFVGQFYLQGSQMRTLPGEILLDFNLSDKTLLADSLSELAGRKINVQTKPRGDRARYLKLARTNAATALTSKLSQQSTVHQRLTALASVLKLPEVKRMECFDISHTMGEQTVASCVVFDANGPLRAEYRRYNITGITPGDDYAAMNQVLRRRYGKAIDDSKIPDVILIDGGKGQLAQAKNVFAELDVSWDKNHPLLLGVAKGADRKAGLETLFFEPEGEGFSLPPDSPALHVIQHIRDESHDHAIGGHRKKRAKVKNTSSLETIEGVGPKRRQMLLKYMGGLQGLRNASVEEIAKVPGISQGLAEKIFWSLKH</sequence>
<feature type="chain" id="PRO_1000077780" description="UvrABC system protein C">
    <location>
        <begin position="1"/>
        <end position="610"/>
    </location>
</feature>
<feature type="domain" description="GIY-YIG" evidence="1">
    <location>
        <begin position="16"/>
        <end position="94"/>
    </location>
</feature>
<feature type="domain" description="UVR" evidence="1">
    <location>
        <begin position="204"/>
        <end position="239"/>
    </location>
</feature>
<comment type="function">
    <text evidence="1">The UvrABC repair system catalyzes the recognition and processing of DNA lesions. UvrC both incises the 5' and 3' sides of the lesion. The N-terminal half is responsible for the 3' incision and the C-terminal half is responsible for the 5' incision.</text>
</comment>
<comment type="subunit">
    <text evidence="1">Interacts with UvrB in an incision complex.</text>
</comment>
<comment type="subcellular location">
    <subcellularLocation>
        <location evidence="1">Cytoplasm</location>
    </subcellularLocation>
</comment>
<comment type="similarity">
    <text evidence="1">Belongs to the UvrC family.</text>
</comment>
<name>UVRC_ECO24</name>
<dbReference type="EMBL" id="CP000800">
    <property type="protein sequence ID" value="ABV16883.1"/>
    <property type="molecule type" value="Genomic_DNA"/>
</dbReference>
<dbReference type="RefSeq" id="WP_001283421.1">
    <property type="nucleotide sequence ID" value="NC_009801.1"/>
</dbReference>
<dbReference type="SMR" id="A7ZN37"/>
<dbReference type="GeneID" id="93776218"/>
<dbReference type="KEGG" id="ecw:EcE24377A_2146"/>
<dbReference type="HOGENOM" id="CLU_014841_3_0_6"/>
<dbReference type="Proteomes" id="UP000001122">
    <property type="component" value="Chromosome"/>
</dbReference>
<dbReference type="GO" id="GO:0005737">
    <property type="term" value="C:cytoplasm"/>
    <property type="evidence" value="ECO:0007669"/>
    <property type="project" value="UniProtKB-SubCell"/>
</dbReference>
<dbReference type="GO" id="GO:0009380">
    <property type="term" value="C:excinuclease repair complex"/>
    <property type="evidence" value="ECO:0007669"/>
    <property type="project" value="InterPro"/>
</dbReference>
<dbReference type="GO" id="GO:0003677">
    <property type="term" value="F:DNA binding"/>
    <property type="evidence" value="ECO:0007669"/>
    <property type="project" value="UniProtKB-UniRule"/>
</dbReference>
<dbReference type="GO" id="GO:0009381">
    <property type="term" value="F:excinuclease ABC activity"/>
    <property type="evidence" value="ECO:0007669"/>
    <property type="project" value="UniProtKB-UniRule"/>
</dbReference>
<dbReference type="GO" id="GO:0006289">
    <property type="term" value="P:nucleotide-excision repair"/>
    <property type="evidence" value="ECO:0007669"/>
    <property type="project" value="UniProtKB-UniRule"/>
</dbReference>
<dbReference type="GO" id="GO:0009432">
    <property type="term" value="P:SOS response"/>
    <property type="evidence" value="ECO:0007669"/>
    <property type="project" value="UniProtKB-UniRule"/>
</dbReference>
<dbReference type="CDD" id="cd10434">
    <property type="entry name" value="GIY-YIG_UvrC_Cho"/>
    <property type="match status" value="1"/>
</dbReference>
<dbReference type="FunFam" id="1.10.150.20:FF:000005">
    <property type="entry name" value="UvrABC system protein C"/>
    <property type="match status" value="1"/>
</dbReference>
<dbReference type="FunFam" id="3.30.420.340:FF:000001">
    <property type="entry name" value="UvrABC system protein C"/>
    <property type="match status" value="1"/>
</dbReference>
<dbReference type="FunFam" id="3.40.1440.10:FF:000001">
    <property type="entry name" value="UvrABC system protein C"/>
    <property type="match status" value="1"/>
</dbReference>
<dbReference type="FunFam" id="4.10.860.10:FF:000002">
    <property type="entry name" value="UvrABC system protein C"/>
    <property type="match status" value="1"/>
</dbReference>
<dbReference type="Gene3D" id="1.10.150.20">
    <property type="entry name" value="5' to 3' exonuclease, C-terminal subdomain"/>
    <property type="match status" value="1"/>
</dbReference>
<dbReference type="Gene3D" id="3.40.1440.10">
    <property type="entry name" value="GIY-YIG endonuclease"/>
    <property type="match status" value="1"/>
</dbReference>
<dbReference type="Gene3D" id="4.10.860.10">
    <property type="entry name" value="UVR domain"/>
    <property type="match status" value="1"/>
</dbReference>
<dbReference type="Gene3D" id="3.30.420.340">
    <property type="entry name" value="UvrC, RNAse H endonuclease domain"/>
    <property type="match status" value="1"/>
</dbReference>
<dbReference type="HAMAP" id="MF_00203">
    <property type="entry name" value="UvrC"/>
    <property type="match status" value="1"/>
</dbReference>
<dbReference type="InterPro" id="IPR000305">
    <property type="entry name" value="GIY-YIG_endonuc"/>
</dbReference>
<dbReference type="InterPro" id="IPR035901">
    <property type="entry name" value="GIY-YIG_endonuc_sf"/>
</dbReference>
<dbReference type="InterPro" id="IPR047296">
    <property type="entry name" value="GIY-YIG_UvrC_Cho"/>
</dbReference>
<dbReference type="InterPro" id="IPR003583">
    <property type="entry name" value="Hlx-hairpin-Hlx_DNA-bd_motif"/>
</dbReference>
<dbReference type="InterPro" id="IPR010994">
    <property type="entry name" value="RuvA_2-like"/>
</dbReference>
<dbReference type="InterPro" id="IPR001943">
    <property type="entry name" value="UVR_dom"/>
</dbReference>
<dbReference type="InterPro" id="IPR036876">
    <property type="entry name" value="UVR_dom_sf"/>
</dbReference>
<dbReference type="InterPro" id="IPR050066">
    <property type="entry name" value="UvrABC_protein_C"/>
</dbReference>
<dbReference type="InterPro" id="IPR004791">
    <property type="entry name" value="UvrC"/>
</dbReference>
<dbReference type="InterPro" id="IPR001162">
    <property type="entry name" value="UvrC_RNase_H_dom"/>
</dbReference>
<dbReference type="InterPro" id="IPR038476">
    <property type="entry name" value="UvrC_RNase_H_dom_sf"/>
</dbReference>
<dbReference type="NCBIfam" id="NF001824">
    <property type="entry name" value="PRK00558.1-5"/>
    <property type="match status" value="1"/>
</dbReference>
<dbReference type="NCBIfam" id="TIGR00194">
    <property type="entry name" value="uvrC"/>
    <property type="match status" value="1"/>
</dbReference>
<dbReference type="PANTHER" id="PTHR30562:SF1">
    <property type="entry name" value="UVRABC SYSTEM PROTEIN C"/>
    <property type="match status" value="1"/>
</dbReference>
<dbReference type="PANTHER" id="PTHR30562">
    <property type="entry name" value="UVRC/OXIDOREDUCTASE"/>
    <property type="match status" value="1"/>
</dbReference>
<dbReference type="Pfam" id="PF01541">
    <property type="entry name" value="GIY-YIG"/>
    <property type="match status" value="1"/>
</dbReference>
<dbReference type="Pfam" id="PF14520">
    <property type="entry name" value="HHH_5"/>
    <property type="match status" value="1"/>
</dbReference>
<dbReference type="Pfam" id="PF02151">
    <property type="entry name" value="UVR"/>
    <property type="match status" value="1"/>
</dbReference>
<dbReference type="Pfam" id="PF22920">
    <property type="entry name" value="UvrC_RNaseH"/>
    <property type="match status" value="1"/>
</dbReference>
<dbReference type="Pfam" id="PF08459">
    <property type="entry name" value="UvrC_RNaseH_dom"/>
    <property type="match status" value="1"/>
</dbReference>
<dbReference type="SMART" id="SM00465">
    <property type="entry name" value="GIYc"/>
    <property type="match status" value="1"/>
</dbReference>
<dbReference type="SMART" id="SM00278">
    <property type="entry name" value="HhH1"/>
    <property type="match status" value="2"/>
</dbReference>
<dbReference type="SUPFAM" id="SSF46600">
    <property type="entry name" value="C-terminal UvrC-binding domain of UvrB"/>
    <property type="match status" value="1"/>
</dbReference>
<dbReference type="SUPFAM" id="SSF82771">
    <property type="entry name" value="GIY-YIG endonuclease"/>
    <property type="match status" value="1"/>
</dbReference>
<dbReference type="SUPFAM" id="SSF47781">
    <property type="entry name" value="RuvA domain 2-like"/>
    <property type="match status" value="1"/>
</dbReference>
<dbReference type="PROSITE" id="PS50164">
    <property type="entry name" value="GIY_YIG"/>
    <property type="match status" value="1"/>
</dbReference>
<dbReference type="PROSITE" id="PS50151">
    <property type="entry name" value="UVR"/>
    <property type="match status" value="1"/>
</dbReference>
<dbReference type="PROSITE" id="PS50165">
    <property type="entry name" value="UVRC"/>
    <property type="match status" value="1"/>
</dbReference>
<accession>A7ZN37</accession>
<proteinExistence type="inferred from homology"/>
<reference key="1">
    <citation type="journal article" date="2008" name="J. Bacteriol.">
        <title>The pangenome structure of Escherichia coli: comparative genomic analysis of E. coli commensal and pathogenic isolates.</title>
        <authorList>
            <person name="Rasko D.A."/>
            <person name="Rosovitz M.J."/>
            <person name="Myers G.S.A."/>
            <person name="Mongodin E.F."/>
            <person name="Fricke W.F."/>
            <person name="Gajer P."/>
            <person name="Crabtree J."/>
            <person name="Sebaihia M."/>
            <person name="Thomson N.R."/>
            <person name="Chaudhuri R."/>
            <person name="Henderson I.R."/>
            <person name="Sperandio V."/>
            <person name="Ravel J."/>
        </authorList>
    </citation>
    <scope>NUCLEOTIDE SEQUENCE [LARGE SCALE GENOMIC DNA]</scope>
    <source>
        <strain>E24377A / ETEC</strain>
    </source>
</reference>
<keyword id="KW-0963">Cytoplasm</keyword>
<keyword id="KW-0227">DNA damage</keyword>
<keyword id="KW-0228">DNA excision</keyword>
<keyword id="KW-0234">DNA repair</keyword>
<keyword id="KW-0267">Excision nuclease</keyword>
<keyword id="KW-1185">Reference proteome</keyword>
<keyword id="KW-0742">SOS response</keyword>